<sequence length="660" mass="74224">MKTVVFAYHDMGCLGIEALLAAGYEISAIFTHTDNPGEKAFYGSVAHLAAERGIPVYAPDNVNHPLWVERIAQLSPEVIFSFYYRHLICDEILQLAPAGAFNLHGSLLPKYRGRAPLNWVLVNGETETGVTLHRMVKRADAGAIVAQLRVAIAPDDIAITLHHKLCHAARQLLEQTLPAIKHGNILEIAQRENEATCFGRRTPDDSFLEWHKPASVLHNMVRAVADPWPGAFSYVGNQKFTVWSSRVHPHASKAQPGSVISIAPLLIACGDGALEIVTGQAGDGITMQGSQLAQTLGLVQGSRLNSQPACTARRRTRVLILGVNGFIGNHLTERLLREDHYEVYGLDIGSDAISRFLNHPHFHFVEGDISIHSEWIEYHVKKCDVVLPLVAIATPIEYTRNPLRVFELDFEENLRIIRYCVKYRKRIIFPSTSEVYGMCSDKYFDEDHSNLIVGPVNKPRWIYSVSKQLLDRVIWAYGEKEGLQFTLFRPFNWMGPRLDNLNAARIGSSRAITQLILNLVEGSPIKLIDGGKQKRCFTDIRDGIEALYRIIENAGNRCDGEIINIGNPENEASIEELGEMLLASFEKHPLRHHFPPFAGFRVVESSSYYGKGYQDVEHRKPSIRNAHRCLDWEPKIDMQETIDETLDFFLRTVDLTDKPS</sequence>
<dbReference type="EC" id="2.1.2.13" evidence="1"/>
<dbReference type="EC" id="1.1.1.305" evidence="1"/>
<dbReference type="EMBL" id="CP000802">
    <property type="protein sequence ID" value="ABV06676.1"/>
    <property type="molecule type" value="Genomic_DNA"/>
</dbReference>
<dbReference type="RefSeq" id="WP_000860245.1">
    <property type="nucleotide sequence ID" value="NC_009800.1"/>
</dbReference>
<dbReference type="SMR" id="A8A2C2"/>
<dbReference type="KEGG" id="ecx:EcHS_A2400"/>
<dbReference type="HOGENOM" id="CLU_007383_23_2_6"/>
<dbReference type="UniPathway" id="UPA00030"/>
<dbReference type="UniPathway" id="UPA00032">
    <property type="reaction ID" value="UER00492"/>
</dbReference>
<dbReference type="UniPathway" id="UPA00032">
    <property type="reaction ID" value="UER00494"/>
</dbReference>
<dbReference type="GO" id="GO:0016020">
    <property type="term" value="C:membrane"/>
    <property type="evidence" value="ECO:0007669"/>
    <property type="project" value="GOC"/>
</dbReference>
<dbReference type="GO" id="GO:0016831">
    <property type="term" value="F:carboxy-lyase activity"/>
    <property type="evidence" value="ECO:0007669"/>
    <property type="project" value="InterPro"/>
</dbReference>
<dbReference type="GO" id="GO:0099619">
    <property type="term" value="F:UDP-4-amino-4-deoxy-L-arabinose formyltransferase activity"/>
    <property type="evidence" value="ECO:0007669"/>
    <property type="project" value="UniProtKB-EC"/>
</dbReference>
<dbReference type="GO" id="GO:0099618">
    <property type="term" value="F:UDP-glucuronate dehydrogenase activity"/>
    <property type="evidence" value="ECO:0007669"/>
    <property type="project" value="UniProtKB-EC"/>
</dbReference>
<dbReference type="GO" id="GO:0009245">
    <property type="term" value="P:lipid A biosynthetic process"/>
    <property type="evidence" value="ECO:0007669"/>
    <property type="project" value="UniProtKB-KW"/>
</dbReference>
<dbReference type="GO" id="GO:0009103">
    <property type="term" value="P:lipopolysaccharide biosynthetic process"/>
    <property type="evidence" value="ECO:0007669"/>
    <property type="project" value="UniProtKB-UniRule"/>
</dbReference>
<dbReference type="GO" id="GO:0046677">
    <property type="term" value="P:response to antibiotic"/>
    <property type="evidence" value="ECO:0007669"/>
    <property type="project" value="UniProtKB-KW"/>
</dbReference>
<dbReference type="CDD" id="cd08702">
    <property type="entry name" value="Arna_FMT_C"/>
    <property type="match status" value="1"/>
</dbReference>
<dbReference type="CDD" id="cd05257">
    <property type="entry name" value="Arna_like_SDR_e"/>
    <property type="match status" value="1"/>
</dbReference>
<dbReference type="CDD" id="cd08644">
    <property type="entry name" value="FMT_core_ArnA_N"/>
    <property type="match status" value="1"/>
</dbReference>
<dbReference type="FunFam" id="3.40.50.12230:FF:000002">
    <property type="entry name" value="Bifunctional polymyxin resistance protein ArnA"/>
    <property type="match status" value="1"/>
</dbReference>
<dbReference type="FunFam" id="3.40.50.720:FF:000197">
    <property type="entry name" value="Bifunctional polymyxin resistance protein ArnA"/>
    <property type="match status" value="1"/>
</dbReference>
<dbReference type="Gene3D" id="3.40.50.12230">
    <property type="match status" value="1"/>
</dbReference>
<dbReference type="Gene3D" id="3.40.50.720">
    <property type="entry name" value="NAD(P)-binding Rossmann-like Domain"/>
    <property type="match status" value="1"/>
</dbReference>
<dbReference type="HAMAP" id="MF_01166">
    <property type="entry name" value="ArnA"/>
    <property type="match status" value="1"/>
</dbReference>
<dbReference type="InterPro" id="IPR045869">
    <property type="entry name" value="Arna-like_SDR_e"/>
</dbReference>
<dbReference type="InterPro" id="IPR021168">
    <property type="entry name" value="Bifun_polymyxin_resist_ArnA"/>
</dbReference>
<dbReference type="InterPro" id="IPR001509">
    <property type="entry name" value="Epimerase_deHydtase"/>
</dbReference>
<dbReference type="InterPro" id="IPR005793">
    <property type="entry name" value="Formyl_trans_C"/>
</dbReference>
<dbReference type="InterPro" id="IPR002376">
    <property type="entry name" value="Formyl_transf_N"/>
</dbReference>
<dbReference type="InterPro" id="IPR036477">
    <property type="entry name" value="Formyl_transf_N_sf"/>
</dbReference>
<dbReference type="InterPro" id="IPR011034">
    <property type="entry name" value="Formyl_transferase-like_C_sf"/>
</dbReference>
<dbReference type="InterPro" id="IPR050177">
    <property type="entry name" value="Lipid_A_modif_metabolic_enz"/>
</dbReference>
<dbReference type="InterPro" id="IPR036291">
    <property type="entry name" value="NAD(P)-bd_dom_sf"/>
</dbReference>
<dbReference type="NCBIfam" id="NF005414">
    <property type="entry name" value="PRK06988.1"/>
    <property type="match status" value="1"/>
</dbReference>
<dbReference type="NCBIfam" id="NF005998">
    <property type="entry name" value="PRK08125.1"/>
    <property type="match status" value="1"/>
</dbReference>
<dbReference type="NCBIfam" id="NF008872">
    <property type="entry name" value="PRK11908.1"/>
    <property type="match status" value="1"/>
</dbReference>
<dbReference type="PANTHER" id="PTHR43245">
    <property type="entry name" value="BIFUNCTIONAL POLYMYXIN RESISTANCE PROTEIN ARNA"/>
    <property type="match status" value="1"/>
</dbReference>
<dbReference type="PANTHER" id="PTHR43245:SF13">
    <property type="entry name" value="UDP-D-APIOSE_UDP-D-XYLOSE SYNTHASE 2"/>
    <property type="match status" value="1"/>
</dbReference>
<dbReference type="Pfam" id="PF01370">
    <property type="entry name" value="Epimerase"/>
    <property type="match status" value="1"/>
</dbReference>
<dbReference type="Pfam" id="PF02911">
    <property type="entry name" value="Formyl_trans_C"/>
    <property type="match status" value="1"/>
</dbReference>
<dbReference type="Pfam" id="PF00551">
    <property type="entry name" value="Formyl_trans_N"/>
    <property type="match status" value="1"/>
</dbReference>
<dbReference type="PIRSF" id="PIRSF036506">
    <property type="entry name" value="Bifun_polymyxin_resist_ArnA"/>
    <property type="match status" value="1"/>
</dbReference>
<dbReference type="SUPFAM" id="SSF50486">
    <property type="entry name" value="FMT C-terminal domain-like"/>
    <property type="match status" value="1"/>
</dbReference>
<dbReference type="SUPFAM" id="SSF53328">
    <property type="entry name" value="Formyltransferase"/>
    <property type="match status" value="1"/>
</dbReference>
<dbReference type="SUPFAM" id="SSF51735">
    <property type="entry name" value="NAD(P)-binding Rossmann-fold domains"/>
    <property type="match status" value="1"/>
</dbReference>
<keyword id="KW-0046">Antibiotic resistance</keyword>
<keyword id="KW-0441">Lipid A biosynthesis</keyword>
<keyword id="KW-0444">Lipid biosynthesis</keyword>
<keyword id="KW-0443">Lipid metabolism</keyword>
<keyword id="KW-0448">Lipopolysaccharide biosynthesis</keyword>
<keyword id="KW-0511">Multifunctional enzyme</keyword>
<keyword id="KW-0520">NAD</keyword>
<keyword id="KW-0560">Oxidoreductase</keyword>
<keyword id="KW-0808">Transferase</keyword>
<name>ARNA_ECOHS</name>
<organism>
    <name type="scientific">Escherichia coli O9:H4 (strain HS)</name>
    <dbReference type="NCBI Taxonomy" id="331112"/>
    <lineage>
        <taxon>Bacteria</taxon>
        <taxon>Pseudomonadati</taxon>
        <taxon>Pseudomonadota</taxon>
        <taxon>Gammaproteobacteria</taxon>
        <taxon>Enterobacterales</taxon>
        <taxon>Enterobacteriaceae</taxon>
        <taxon>Escherichia</taxon>
    </lineage>
</organism>
<gene>
    <name evidence="1" type="primary">arnA</name>
    <name type="ordered locus">EcHS_A2400</name>
</gene>
<protein>
    <recommendedName>
        <fullName evidence="1">Bifunctional polymyxin resistance protein ArnA</fullName>
    </recommendedName>
    <domain>
        <recommendedName>
            <fullName evidence="1">UDP-4-amino-4-deoxy-L-arabinose formyltransferase</fullName>
            <ecNumber evidence="1">2.1.2.13</ecNumber>
        </recommendedName>
        <alternativeName>
            <fullName evidence="1">ArnAFT</fullName>
        </alternativeName>
        <alternativeName>
            <fullName evidence="1">UDP-L-Ara4N formyltransferase</fullName>
        </alternativeName>
    </domain>
    <domain>
        <recommendedName>
            <fullName evidence="1">UDP-glucuronic acid oxidase, UDP-4-keto-hexauronic acid decarboxylating</fullName>
            <ecNumber evidence="1">1.1.1.305</ecNumber>
        </recommendedName>
        <alternativeName>
            <fullName evidence="1">ArnADH</fullName>
        </alternativeName>
        <alternativeName>
            <fullName evidence="1">UDP-GlcUA decarboxylase</fullName>
        </alternativeName>
        <alternativeName>
            <fullName evidence="1">UDP-glucuronic acid dehydrogenase</fullName>
        </alternativeName>
    </domain>
</protein>
<proteinExistence type="inferred from homology"/>
<reference key="1">
    <citation type="journal article" date="2008" name="J. Bacteriol.">
        <title>The pangenome structure of Escherichia coli: comparative genomic analysis of E. coli commensal and pathogenic isolates.</title>
        <authorList>
            <person name="Rasko D.A."/>
            <person name="Rosovitz M.J."/>
            <person name="Myers G.S.A."/>
            <person name="Mongodin E.F."/>
            <person name="Fricke W.F."/>
            <person name="Gajer P."/>
            <person name="Crabtree J."/>
            <person name="Sebaihia M."/>
            <person name="Thomson N.R."/>
            <person name="Chaudhuri R."/>
            <person name="Henderson I.R."/>
            <person name="Sperandio V."/>
            <person name="Ravel J."/>
        </authorList>
    </citation>
    <scope>NUCLEOTIDE SEQUENCE [LARGE SCALE GENOMIC DNA]</scope>
    <source>
        <strain>HS</strain>
    </source>
</reference>
<evidence type="ECO:0000255" key="1">
    <source>
        <dbReference type="HAMAP-Rule" id="MF_01166"/>
    </source>
</evidence>
<accession>A8A2C2</accession>
<feature type="chain" id="PRO_1000065675" description="Bifunctional polymyxin resistance protein ArnA">
    <location>
        <begin position="1"/>
        <end position="660"/>
    </location>
</feature>
<feature type="region of interest" description="Formyltransferase ArnAFT">
    <location>
        <begin position="1"/>
        <end position="304"/>
    </location>
</feature>
<feature type="region of interest" description="Dehydrogenase ArnADH">
    <location>
        <begin position="314"/>
        <end position="660"/>
    </location>
</feature>
<feature type="active site" description="Proton donor; for formyltransferase activity" evidence="1">
    <location>
        <position position="104"/>
    </location>
</feature>
<feature type="active site" description="Proton acceptor; for decarboxylase activity" evidence="1">
    <location>
        <position position="434"/>
    </location>
</feature>
<feature type="active site" description="Proton donor; for decarboxylase activity" evidence="1">
    <location>
        <position position="619"/>
    </location>
</feature>
<feature type="binding site" evidence="1">
    <location>
        <begin position="86"/>
        <end position="88"/>
    </location>
    <ligand>
        <name>(6R)-10-formyltetrahydrofolate</name>
        <dbReference type="ChEBI" id="CHEBI:195366"/>
    </ligand>
</feature>
<feature type="binding site" evidence="1">
    <location>
        <position position="114"/>
    </location>
    <ligand>
        <name>(6R)-10-formyltetrahydrofolate</name>
        <dbReference type="ChEBI" id="CHEBI:195366"/>
    </ligand>
</feature>
<feature type="binding site" evidence="1">
    <location>
        <begin position="136"/>
        <end position="140"/>
    </location>
    <ligand>
        <name>(6R)-10-formyltetrahydrofolate</name>
        <dbReference type="ChEBI" id="CHEBI:195366"/>
    </ligand>
</feature>
<feature type="binding site" evidence="1">
    <location>
        <position position="347"/>
    </location>
    <ligand>
        <name>NAD(+)</name>
        <dbReference type="ChEBI" id="CHEBI:57540"/>
    </ligand>
</feature>
<feature type="binding site" evidence="1">
    <location>
        <begin position="368"/>
        <end position="369"/>
    </location>
    <ligand>
        <name>NAD(+)</name>
        <dbReference type="ChEBI" id="CHEBI:57540"/>
    </ligand>
</feature>
<feature type="binding site" evidence="1">
    <location>
        <position position="393"/>
    </location>
    <ligand>
        <name>UDP-alpha-D-glucuronate</name>
        <dbReference type="ChEBI" id="CHEBI:58052"/>
    </ligand>
</feature>
<feature type="binding site" evidence="1">
    <location>
        <position position="398"/>
    </location>
    <ligand>
        <name>UDP-alpha-D-glucuronate</name>
        <dbReference type="ChEBI" id="CHEBI:58052"/>
    </ligand>
</feature>
<feature type="binding site" evidence="1">
    <location>
        <begin position="432"/>
        <end position="433"/>
    </location>
    <ligand>
        <name>UDP-alpha-D-glucuronate</name>
        <dbReference type="ChEBI" id="CHEBI:58052"/>
    </ligand>
</feature>
<feature type="binding site" evidence="1">
    <location>
        <position position="460"/>
    </location>
    <ligand>
        <name>UDP-alpha-D-glucuronate</name>
        <dbReference type="ChEBI" id="CHEBI:58052"/>
    </ligand>
</feature>
<feature type="binding site" evidence="1">
    <location>
        <position position="492"/>
    </location>
    <ligand>
        <name>UDP-alpha-D-glucuronate</name>
        <dbReference type="ChEBI" id="CHEBI:58052"/>
    </ligand>
</feature>
<feature type="binding site" evidence="1">
    <location>
        <begin position="526"/>
        <end position="535"/>
    </location>
    <ligand>
        <name>UDP-alpha-D-glucuronate</name>
        <dbReference type="ChEBI" id="CHEBI:58052"/>
    </ligand>
</feature>
<feature type="binding site" evidence="1">
    <location>
        <position position="613"/>
    </location>
    <ligand>
        <name>UDP-alpha-D-glucuronate</name>
        <dbReference type="ChEBI" id="CHEBI:58052"/>
    </ligand>
</feature>
<feature type="site" description="Transition state stabilizer" evidence="1">
    <location>
        <position position="102"/>
    </location>
</feature>
<feature type="site" description="Raises pKa of active site His" evidence="1">
    <location>
        <position position="140"/>
    </location>
</feature>
<comment type="function">
    <text evidence="1">Bifunctional enzyme that catalyzes the oxidative decarboxylation of UDP-glucuronic acid (UDP-GlcUA) to UDP-4-keto-arabinose (UDP-Ara4O) and the addition of a formyl group to UDP-4-amino-4-deoxy-L-arabinose (UDP-L-Ara4N) to form UDP-L-4-formamido-arabinose (UDP-L-Ara4FN). The modified arabinose is attached to lipid A and is required for resistance to polymyxin and cationic antimicrobial peptides.</text>
</comment>
<comment type="catalytic activity">
    <reaction evidence="1">
        <text>UDP-alpha-D-glucuronate + NAD(+) = UDP-beta-L-threo-pentopyranos-4-ulose + CO2 + NADH</text>
        <dbReference type="Rhea" id="RHEA:24702"/>
        <dbReference type="ChEBI" id="CHEBI:16526"/>
        <dbReference type="ChEBI" id="CHEBI:57540"/>
        <dbReference type="ChEBI" id="CHEBI:57945"/>
        <dbReference type="ChEBI" id="CHEBI:58052"/>
        <dbReference type="ChEBI" id="CHEBI:58710"/>
        <dbReference type="EC" id="1.1.1.305"/>
    </reaction>
</comment>
<comment type="catalytic activity">
    <reaction evidence="1">
        <text>UDP-4-amino-4-deoxy-beta-L-arabinose + (6R)-10-formyltetrahydrofolate = UDP-4-deoxy-4-formamido-beta-L-arabinose + (6S)-5,6,7,8-tetrahydrofolate + H(+)</text>
        <dbReference type="Rhea" id="RHEA:24706"/>
        <dbReference type="ChEBI" id="CHEBI:15378"/>
        <dbReference type="ChEBI" id="CHEBI:57453"/>
        <dbReference type="ChEBI" id="CHEBI:58708"/>
        <dbReference type="ChEBI" id="CHEBI:58709"/>
        <dbReference type="ChEBI" id="CHEBI:195366"/>
        <dbReference type="EC" id="2.1.2.13"/>
    </reaction>
</comment>
<comment type="pathway">
    <text evidence="1">Nucleotide-sugar biosynthesis; UDP-4-deoxy-4-formamido-beta-L-arabinose biosynthesis; UDP-4-deoxy-4-formamido-beta-L-arabinose from UDP-alpha-D-glucuronate: step 1/3.</text>
</comment>
<comment type="pathway">
    <text evidence="1">Nucleotide-sugar biosynthesis; UDP-4-deoxy-4-formamido-beta-L-arabinose biosynthesis; UDP-4-deoxy-4-formamido-beta-L-arabinose from UDP-alpha-D-glucuronate: step 3/3.</text>
</comment>
<comment type="pathway">
    <text evidence="1">Bacterial outer membrane biogenesis; lipopolysaccharide biosynthesis.</text>
</comment>
<comment type="subunit">
    <text evidence="1">Homohexamer, formed by a dimer of trimers.</text>
</comment>
<comment type="similarity">
    <text evidence="1">In the N-terminal section; belongs to the Fmt family. UDP-L-Ara4N formyltransferase subfamily.</text>
</comment>
<comment type="similarity">
    <text evidence="1">In the C-terminal section; belongs to the NAD(P)-dependent epimerase/dehydratase family. UDP-glucuronic acid decarboxylase subfamily.</text>
</comment>